<comment type="function">
    <text evidence="1">Converts o-succinylbenzoyl-CoA (OSB-CoA) to 1,4-dihydroxy-2-naphthoyl-CoA (DHNA-CoA).</text>
</comment>
<comment type="catalytic activity">
    <reaction evidence="1">
        <text>2-succinylbenzoyl-CoA + H(+) = 1,4-dihydroxy-2-naphthoyl-CoA + H2O</text>
        <dbReference type="Rhea" id="RHEA:26562"/>
        <dbReference type="ChEBI" id="CHEBI:15377"/>
        <dbReference type="ChEBI" id="CHEBI:15378"/>
        <dbReference type="ChEBI" id="CHEBI:57364"/>
        <dbReference type="ChEBI" id="CHEBI:58897"/>
        <dbReference type="EC" id="4.1.3.36"/>
    </reaction>
</comment>
<comment type="cofactor">
    <cofactor evidence="1">
        <name>hydrogencarbonate</name>
        <dbReference type="ChEBI" id="CHEBI:17544"/>
    </cofactor>
</comment>
<comment type="pathway">
    <text evidence="1">Quinol/quinone metabolism; 1,4-dihydroxy-2-naphthoate biosynthesis; 1,4-dihydroxy-2-naphthoate from chorismate: step 6/7.</text>
</comment>
<comment type="pathway">
    <text evidence="1">Quinol/quinone metabolism; menaquinone biosynthesis.</text>
</comment>
<comment type="similarity">
    <text evidence="1">Belongs to the enoyl-CoA hydratase/isomerase family. MenB subfamily.</text>
</comment>
<keyword id="KW-0456">Lyase</keyword>
<keyword id="KW-0474">Menaquinone biosynthesis</keyword>
<keyword id="KW-1185">Reference proteome</keyword>
<dbReference type="EC" id="4.1.3.36" evidence="1"/>
<dbReference type="EMBL" id="AP008934">
    <property type="protein sequence ID" value="BAE18891.1"/>
    <property type="molecule type" value="Genomic_DNA"/>
</dbReference>
<dbReference type="RefSeq" id="WP_002483725.1">
    <property type="nucleotide sequence ID" value="NZ_MTGA01000039.1"/>
</dbReference>
<dbReference type="SMR" id="Q49WG8"/>
<dbReference type="GeneID" id="66867920"/>
<dbReference type="KEGG" id="ssp:SSP1746"/>
<dbReference type="eggNOG" id="COG0447">
    <property type="taxonomic scope" value="Bacteria"/>
</dbReference>
<dbReference type="HOGENOM" id="CLU_009834_7_7_9"/>
<dbReference type="OrthoDB" id="9775794at2"/>
<dbReference type="UniPathway" id="UPA00079"/>
<dbReference type="UniPathway" id="UPA01057">
    <property type="reaction ID" value="UER00167"/>
</dbReference>
<dbReference type="Proteomes" id="UP000006371">
    <property type="component" value="Chromosome"/>
</dbReference>
<dbReference type="GO" id="GO:0005829">
    <property type="term" value="C:cytosol"/>
    <property type="evidence" value="ECO:0007669"/>
    <property type="project" value="TreeGrafter"/>
</dbReference>
<dbReference type="GO" id="GO:0008935">
    <property type="term" value="F:1,4-dihydroxy-2-naphthoyl-CoA synthase activity"/>
    <property type="evidence" value="ECO:0007669"/>
    <property type="project" value="UniProtKB-UniRule"/>
</dbReference>
<dbReference type="GO" id="GO:0009234">
    <property type="term" value="P:menaquinone biosynthetic process"/>
    <property type="evidence" value="ECO:0007669"/>
    <property type="project" value="UniProtKB-UniRule"/>
</dbReference>
<dbReference type="CDD" id="cd06558">
    <property type="entry name" value="crotonase-like"/>
    <property type="match status" value="1"/>
</dbReference>
<dbReference type="FunFam" id="1.10.12.10:FF:000003">
    <property type="entry name" value="1,4-dihydroxy-2-naphthoyl-CoA synthase"/>
    <property type="match status" value="1"/>
</dbReference>
<dbReference type="FunFam" id="3.90.226.10:FF:000003">
    <property type="entry name" value="1,4-dihydroxy-2-naphthoyl-CoA synthase"/>
    <property type="match status" value="1"/>
</dbReference>
<dbReference type="Gene3D" id="3.90.226.10">
    <property type="entry name" value="2-enoyl-CoA Hydratase, Chain A, domain 1"/>
    <property type="match status" value="1"/>
</dbReference>
<dbReference type="Gene3D" id="1.10.12.10">
    <property type="entry name" value="Lyase 2-enoyl-coa Hydratase, Chain A, domain 2"/>
    <property type="match status" value="1"/>
</dbReference>
<dbReference type="HAMAP" id="MF_01934">
    <property type="entry name" value="MenB"/>
    <property type="match status" value="1"/>
</dbReference>
<dbReference type="InterPro" id="IPR029045">
    <property type="entry name" value="ClpP/crotonase-like_dom_sf"/>
</dbReference>
<dbReference type="InterPro" id="IPR010198">
    <property type="entry name" value="DHNA-CoA_synthase_MenB"/>
</dbReference>
<dbReference type="InterPro" id="IPR018376">
    <property type="entry name" value="Enoyl-CoA_hyd/isom_CS"/>
</dbReference>
<dbReference type="InterPro" id="IPR001753">
    <property type="entry name" value="Enoyl-CoA_hydra/iso"/>
</dbReference>
<dbReference type="InterPro" id="IPR014748">
    <property type="entry name" value="Enoyl-CoA_hydra_C"/>
</dbReference>
<dbReference type="NCBIfam" id="TIGR01929">
    <property type="entry name" value="menB"/>
    <property type="match status" value="1"/>
</dbReference>
<dbReference type="NCBIfam" id="NF005637">
    <property type="entry name" value="PRK07396.1"/>
    <property type="match status" value="1"/>
</dbReference>
<dbReference type="PANTHER" id="PTHR43113:SF1">
    <property type="entry name" value="1,4-DIHYDROXY-2-NAPHTHOYL-COA SYNTHASE, PEROXISOMAL"/>
    <property type="match status" value="1"/>
</dbReference>
<dbReference type="PANTHER" id="PTHR43113">
    <property type="entry name" value="NUCLEOSIDE-DIPHOSPHATE-SUGAR EPIMERASE"/>
    <property type="match status" value="1"/>
</dbReference>
<dbReference type="Pfam" id="PF00378">
    <property type="entry name" value="ECH_1"/>
    <property type="match status" value="1"/>
</dbReference>
<dbReference type="SUPFAM" id="SSF52096">
    <property type="entry name" value="ClpP/crotonase"/>
    <property type="match status" value="1"/>
</dbReference>
<dbReference type="PROSITE" id="PS00166">
    <property type="entry name" value="ENOYL_COA_HYDRATASE"/>
    <property type="match status" value="1"/>
</dbReference>
<name>MENB_STAS1</name>
<organism>
    <name type="scientific">Staphylococcus saprophyticus subsp. saprophyticus (strain ATCC 15305 / DSM 20229 / NCIMB 8711 / NCTC 7292 / S-41)</name>
    <dbReference type="NCBI Taxonomy" id="342451"/>
    <lineage>
        <taxon>Bacteria</taxon>
        <taxon>Bacillati</taxon>
        <taxon>Bacillota</taxon>
        <taxon>Bacilli</taxon>
        <taxon>Bacillales</taxon>
        <taxon>Staphylococcaceae</taxon>
        <taxon>Staphylococcus</taxon>
    </lineage>
</organism>
<reference key="1">
    <citation type="journal article" date="2005" name="Proc. Natl. Acad. Sci. U.S.A.">
        <title>Whole genome sequence of Staphylococcus saprophyticus reveals the pathogenesis of uncomplicated urinary tract infection.</title>
        <authorList>
            <person name="Kuroda M."/>
            <person name="Yamashita A."/>
            <person name="Hirakawa H."/>
            <person name="Kumano M."/>
            <person name="Morikawa K."/>
            <person name="Higashide M."/>
            <person name="Maruyama A."/>
            <person name="Inose Y."/>
            <person name="Matoba K."/>
            <person name="Toh H."/>
            <person name="Kuhara S."/>
            <person name="Hattori M."/>
            <person name="Ohta T."/>
        </authorList>
    </citation>
    <scope>NUCLEOTIDE SEQUENCE [LARGE SCALE GENOMIC DNA]</scope>
    <source>
        <strain>ATCC 15305 / DSM 20229 / NCIMB 8711 / NCTC 7292 / S-41</strain>
    </source>
</reference>
<evidence type="ECO:0000255" key="1">
    <source>
        <dbReference type="HAMAP-Rule" id="MF_01934"/>
    </source>
</evidence>
<evidence type="ECO:0000256" key="2">
    <source>
        <dbReference type="SAM" id="MobiDB-lite"/>
    </source>
</evidence>
<feature type="chain" id="PRO_0000224823" description="1,4-dihydroxy-2-naphthoyl-CoA synthase">
    <location>
        <begin position="1"/>
        <end position="272"/>
    </location>
</feature>
<feature type="region of interest" description="Disordered" evidence="2">
    <location>
        <begin position="253"/>
        <end position="272"/>
    </location>
</feature>
<feature type="compositionally biased region" description="Basic and acidic residues" evidence="2">
    <location>
        <begin position="253"/>
        <end position="264"/>
    </location>
</feature>
<feature type="binding site" description="in other chain" evidence="1">
    <location>
        <position position="33"/>
    </location>
    <ligand>
        <name>substrate</name>
        <note>ligand shared between two neighboring subunits</note>
    </ligand>
</feature>
<feature type="binding site" description="in other chain" evidence="1">
    <location>
        <begin position="72"/>
        <end position="76"/>
    </location>
    <ligand>
        <name>substrate</name>
        <note>ligand shared between two neighboring subunits</note>
    </ligand>
</feature>
<feature type="binding site" description="in other chain" evidence="1">
    <location>
        <position position="84"/>
    </location>
    <ligand>
        <name>substrate</name>
        <note>ligand shared between two neighboring subunits</note>
    </ligand>
</feature>
<feature type="binding site" description="in other chain" evidence="1">
    <location>
        <begin position="116"/>
        <end position="120"/>
    </location>
    <ligand>
        <name>substrate</name>
        <note>ligand shared between two neighboring subunits</note>
    </ligand>
</feature>
<feature type="binding site" evidence="1">
    <location>
        <begin position="141"/>
        <end position="143"/>
    </location>
    <ligand>
        <name>hydrogencarbonate</name>
        <dbReference type="ChEBI" id="CHEBI:17544"/>
    </ligand>
</feature>
<feature type="binding site" description="in other chain" evidence="1">
    <location>
        <position position="142"/>
    </location>
    <ligand>
        <name>substrate</name>
        <note>ligand shared between two neighboring subunits</note>
    </ligand>
</feature>
<feature type="binding site" description="in other chain" evidence="1">
    <location>
        <position position="148"/>
    </location>
    <ligand>
        <name>substrate</name>
        <note>ligand shared between two neighboring subunits</note>
    </ligand>
</feature>
<feature type="binding site" evidence="1">
    <location>
        <position position="245"/>
    </location>
    <ligand>
        <name>substrate</name>
        <note>ligand shared between two neighboring subunits</note>
    </ligand>
</feature>
<feature type="binding site" evidence="1">
    <location>
        <position position="260"/>
    </location>
    <ligand>
        <name>substrate</name>
        <note>ligand shared between two neighboring subunits</note>
    </ligand>
</feature>
<feature type="site" description="Important for catalysis" evidence="1">
    <location>
        <position position="84"/>
    </location>
</feature>
<feature type="site" description="Important for catalysis" evidence="1">
    <location>
        <position position="245"/>
    </location>
</feature>
<sequence length="272" mass="30390">MTRQWETIREYKEIKYELYDGIAKVTINRPEVRNAFTPNTVQEMIDAFTRARDDQRISVIILTGEGDKAFCSGGDQKVRGHGGYVGDDQIPRLNVLDLQRLIRVIPKPVVAMVRGYAIGGGNVLNVVCDLTIAADNAIFGQTGPKVGSFDAGYGSGYLARIVGHKKAREIWYLCRQYNAQEALDMGLVNTVVPLDQVEDETVQWCQEMKQHSPTALRFLKAAMNADTDGLAGLQQMAGDATLLYYTTDEAKEGRDAFKEKRDPDFDQFPKFP</sequence>
<accession>Q49WG8</accession>
<protein>
    <recommendedName>
        <fullName evidence="1">1,4-dihydroxy-2-naphthoyl-CoA synthase</fullName>
        <shortName evidence="1">DHNA-CoA synthase</shortName>
        <ecNumber evidence="1">4.1.3.36</ecNumber>
    </recommendedName>
</protein>
<proteinExistence type="inferred from homology"/>
<gene>
    <name evidence="1" type="primary">menB</name>
    <name type="ordered locus">SSP1746</name>
</gene>